<feature type="chain" id="PRO_1000125663" description="Porphobilinogen deaminase">
    <location>
        <begin position="1"/>
        <end position="290"/>
    </location>
</feature>
<feature type="modified residue" description="S-(dipyrrolylmethanemethyl)cysteine" evidence="1">
    <location>
        <position position="238"/>
    </location>
</feature>
<organism>
    <name type="scientific">Clostridium botulinum (strain Eklund 17B / Type B)</name>
    <dbReference type="NCBI Taxonomy" id="935198"/>
    <lineage>
        <taxon>Bacteria</taxon>
        <taxon>Bacillati</taxon>
        <taxon>Bacillota</taxon>
        <taxon>Clostridia</taxon>
        <taxon>Eubacteriales</taxon>
        <taxon>Clostridiaceae</taxon>
        <taxon>Clostridium</taxon>
    </lineage>
</organism>
<evidence type="ECO:0000255" key="1">
    <source>
        <dbReference type="HAMAP-Rule" id="MF_00260"/>
    </source>
</evidence>
<dbReference type="EC" id="2.5.1.61" evidence="1"/>
<dbReference type="EMBL" id="CP001056">
    <property type="protein sequence ID" value="ACD23252.1"/>
    <property type="molecule type" value="Genomic_DNA"/>
</dbReference>
<dbReference type="SMR" id="B2TPD7"/>
<dbReference type="KEGG" id="cbk:CLL_A2907"/>
<dbReference type="PATRIC" id="fig|935198.13.peg.2869"/>
<dbReference type="HOGENOM" id="CLU_019704_1_0_9"/>
<dbReference type="UniPathway" id="UPA00251">
    <property type="reaction ID" value="UER00319"/>
</dbReference>
<dbReference type="Proteomes" id="UP000001195">
    <property type="component" value="Chromosome"/>
</dbReference>
<dbReference type="GO" id="GO:0005737">
    <property type="term" value="C:cytoplasm"/>
    <property type="evidence" value="ECO:0007669"/>
    <property type="project" value="TreeGrafter"/>
</dbReference>
<dbReference type="GO" id="GO:0004418">
    <property type="term" value="F:hydroxymethylbilane synthase activity"/>
    <property type="evidence" value="ECO:0007669"/>
    <property type="project" value="UniProtKB-UniRule"/>
</dbReference>
<dbReference type="GO" id="GO:0006782">
    <property type="term" value="P:protoporphyrinogen IX biosynthetic process"/>
    <property type="evidence" value="ECO:0007669"/>
    <property type="project" value="UniProtKB-UniRule"/>
</dbReference>
<dbReference type="CDD" id="cd13647">
    <property type="entry name" value="PBP2_PBGD_2"/>
    <property type="match status" value="1"/>
</dbReference>
<dbReference type="FunFam" id="3.40.190.10:FF:000005">
    <property type="entry name" value="Porphobilinogen deaminase"/>
    <property type="match status" value="1"/>
</dbReference>
<dbReference type="Gene3D" id="3.40.190.10">
    <property type="entry name" value="Periplasmic binding protein-like II"/>
    <property type="match status" value="2"/>
</dbReference>
<dbReference type="Gene3D" id="3.30.160.40">
    <property type="entry name" value="Porphobilinogen deaminase, C-terminal domain"/>
    <property type="match status" value="1"/>
</dbReference>
<dbReference type="HAMAP" id="MF_00260">
    <property type="entry name" value="Porphobil_deam"/>
    <property type="match status" value="1"/>
</dbReference>
<dbReference type="InterPro" id="IPR000860">
    <property type="entry name" value="HemC"/>
</dbReference>
<dbReference type="InterPro" id="IPR022419">
    <property type="entry name" value="Porphobilin_deaminase_cofac_BS"/>
</dbReference>
<dbReference type="InterPro" id="IPR022417">
    <property type="entry name" value="Porphobilin_deaminase_N"/>
</dbReference>
<dbReference type="InterPro" id="IPR022418">
    <property type="entry name" value="Porphobilinogen_deaminase_C"/>
</dbReference>
<dbReference type="InterPro" id="IPR036803">
    <property type="entry name" value="Porphobilinogen_deaminase_C_sf"/>
</dbReference>
<dbReference type="NCBIfam" id="TIGR00212">
    <property type="entry name" value="hemC"/>
    <property type="match status" value="1"/>
</dbReference>
<dbReference type="PANTHER" id="PTHR11557">
    <property type="entry name" value="PORPHOBILINOGEN DEAMINASE"/>
    <property type="match status" value="1"/>
</dbReference>
<dbReference type="PANTHER" id="PTHR11557:SF0">
    <property type="entry name" value="PORPHOBILINOGEN DEAMINASE"/>
    <property type="match status" value="1"/>
</dbReference>
<dbReference type="Pfam" id="PF01379">
    <property type="entry name" value="Porphobil_deam"/>
    <property type="match status" value="1"/>
</dbReference>
<dbReference type="Pfam" id="PF03900">
    <property type="entry name" value="Porphobil_deamC"/>
    <property type="match status" value="1"/>
</dbReference>
<dbReference type="PIRSF" id="PIRSF001438">
    <property type="entry name" value="4pyrrol_synth_OHMeBilane_synth"/>
    <property type="match status" value="1"/>
</dbReference>
<dbReference type="PRINTS" id="PR00151">
    <property type="entry name" value="PORPHBDMNASE"/>
</dbReference>
<dbReference type="SUPFAM" id="SSF53850">
    <property type="entry name" value="Periplasmic binding protein-like II"/>
    <property type="match status" value="1"/>
</dbReference>
<dbReference type="SUPFAM" id="SSF54782">
    <property type="entry name" value="Porphobilinogen deaminase (hydroxymethylbilane synthase), C-terminal domain"/>
    <property type="match status" value="1"/>
</dbReference>
<dbReference type="PROSITE" id="PS00533">
    <property type="entry name" value="PORPHOBILINOGEN_DEAM"/>
    <property type="match status" value="1"/>
</dbReference>
<reference key="1">
    <citation type="submission" date="2008-04" db="EMBL/GenBank/DDBJ databases">
        <title>Complete sequence of Clostridium botulinum strain Eklund.</title>
        <authorList>
            <person name="Brinkac L.M."/>
            <person name="Brown J.L."/>
            <person name="Bruce D."/>
            <person name="Detter C."/>
            <person name="Munk C."/>
            <person name="Smith L.A."/>
            <person name="Smith T.J."/>
            <person name="Sutton G."/>
            <person name="Brettin T.S."/>
        </authorList>
    </citation>
    <scope>NUCLEOTIDE SEQUENCE [LARGE SCALE GENOMIC DNA]</scope>
    <source>
        <strain>Eklund 17B / Type B</strain>
    </source>
</reference>
<name>HEM3_CLOBB</name>
<proteinExistence type="inferred from homology"/>
<accession>B2TPD7</accession>
<keyword id="KW-0627">Porphyrin biosynthesis</keyword>
<keyword id="KW-0808">Transferase</keyword>
<protein>
    <recommendedName>
        <fullName evidence="1">Porphobilinogen deaminase</fullName>
        <shortName evidence="1">PBG</shortName>
        <ecNumber evidence="1">2.5.1.61</ecNumber>
    </recommendedName>
    <alternativeName>
        <fullName evidence="1">Hydroxymethylbilane synthase</fullName>
        <shortName evidence="1">HMBS</shortName>
    </alternativeName>
    <alternativeName>
        <fullName evidence="1">Pre-uroporphyrinogen synthase</fullName>
    </alternativeName>
</protein>
<sequence length="290" mass="31914">MNELIIATRKSKLAQVQTEIIMGKLKSKFNIDSKKLLIVTEGDRKLDVSLNKIGGKGLFVKDIELALLNKEAHAAVHSMKDVPFEVSSEFEITAITGREDIRDVFISNGDISFKDIKKGAKVGTSSIRRAAQLKLLRSDLEIVPIRGNVQTRLKKMEEQNLDGIVLAAAGLKRLGDENLITDYFDPKEFLPAVSQGALGIECLKDGDANKYFEALIDAEATLTVEAERSFMKELQGDCHSLIGAYSEIQGDDLYMIGIYDIGGKIVKKDILGCKTNNIELGKKLAQKILG</sequence>
<comment type="function">
    <text evidence="1">Tetrapolymerization of the monopyrrole PBG into the hydroxymethylbilane pre-uroporphyrinogen in several discrete steps.</text>
</comment>
<comment type="catalytic activity">
    <reaction evidence="1">
        <text>4 porphobilinogen + H2O = hydroxymethylbilane + 4 NH4(+)</text>
        <dbReference type="Rhea" id="RHEA:13185"/>
        <dbReference type="ChEBI" id="CHEBI:15377"/>
        <dbReference type="ChEBI" id="CHEBI:28938"/>
        <dbReference type="ChEBI" id="CHEBI:57845"/>
        <dbReference type="ChEBI" id="CHEBI:58126"/>
        <dbReference type="EC" id="2.5.1.61"/>
    </reaction>
</comment>
<comment type="cofactor">
    <cofactor evidence="1">
        <name>dipyrromethane</name>
        <dbReference type="ChEBI" id="CHEBI:60342"/>
    </cofactor>
    <text evidence="1">Binds 1 dipyrromethane group covalently.</text>
</comment>
<comment type="pathway">
    <text evidence="1">Porphyrin-containing compound metabolism; protoporphyrin-IX biosynthesis; coproporphyrinogen-III from 5-aminolevulinate: step 2/4.</text>
</comment>
<comment type="subunit">
    <text evidence="1">Monomer.</text>
</comment>
<comment type="miscellaneous">
    <text evidence="1">The porphobilinogen subunits are added to the dipyrromethane group.</text>
</comment>
<comment type="similarity">
    <text evidence="1">Belongs to the HMBS family.</text>
</comment>
<gene>
    <name evidence="1" type="primary">hemC</name>
    <name type="ordered locus">CLL_A2907</name>
</gene>